<keyword id="KW-0687">Ribonucleoprotein</keyword>
<keyword id="KW-0689">Ribosomal protein</keyword>
<keyword id="KW-0694">RNA-binding</keyword>
<keyword id="KW-0699">rRNA-binding</keyword>
<proteinExistence type="inferred from homology"/>
<evidence type="ECO:0000255" key="1">
    <source>
        <dbReference type="HAMAP-Rule" id="MF_01337"/>
    </source>
</evidence>
<evidence type="ECO:0000256" key="2">
    <source>
        <dbReference type="SAM" id="MobiDB-lite"/>
    </source>
</evidence>
<evidence type="ECO:0000305" key="3"/>
<protein>
    <recommendedName>
        <fullName evidence="1">Large ribosomal subunit protein uL18</fullName>
    </recommendedName>
    <alternativeName>
        <fullName evidence="3">50S ribosomal protein L18</fullName>
    </alternativeName>
</protein>
<feature type="chain" id="PRO_1000142724" description="Large ribosomal subunit protein uL18">
    <location>
        <begin position="1"/>
        <end position="118"/>
    </location>
</feature>
<feature type="region of interest" description="Disordered" evidence="2">
    <location>
        <begin position="1"/>
        <end position="25"/>
    </location>
</feature>
<feature type="compositionally biased region" description="Basic residues" evidence="2">
    <location>
        <begin position="10"/>
        <end position="20"/>
    </location>
</feature>
<dbReference type="EMBL" id="CP001015">
    <property type="protein sequence ID" value="ACF56732.1"/>
    <property type="molecule type" value="Genomic_DNA"/>
</dbReference>
<dbReference type="SMR" id="B5E6H1"/>
<dbReference type="KEGG" id="spx:SPG_0211"/>
<dbReference type="HOGENOM" id="CLU_098841_0_1_9"/>
<dbReference type="GO" id="GO:0022625">
    <property type="term" value="C:cytosolic large ribosomal subunit"/>
    <property type="evidence" value="ECO:0007669"/>
    <property type="project" value="TreeGrafter"/>
</dbReference>
<dbReference type="GO" id="GO:0008097">
    <property type="term" value="F:5S rRNA binding"/>
    <property type="evidence" value="ECO:0007669"/>
    <property type="project" value="TreeGrafter"/>
</dbReference>
<dbReference type="GO" id="GO:0003735">
    <property type="term" value="F:structural constituent of ribosome"/>
    <property type="evidence" value="ECO:0007669"/>
    <property type="project" value="InterPro"/>
</dbReference>
<dbReference type="GO" id="GO:0006412">
    <property type="term" value="P:translation"/>
    <property type="evidence" value="ECO:0007669"/>
    <property type="project" value="UniProtKB-UniRule"/>
</dbReference>
<dbReference type="CDD" id="cd00432">
    <property type="entry name" value="Ribosomal_L18_L5e"/>
    <property type="match status" value="1"/>
</dbReference>
<dbReference type="FunFam" id="3.30.420.100:FF:000001">
    <property type="entry name" value="50S ribosomal protein L18"/>
    <property type="match status" value="1"/>
</dbReference>
<dbReference type="Gene3D" id="3.30.420.100">
    <property type="match status" value="1"/>
</dbReference>
<dbReference type="HAMAP" id="MF_01337_B">
    <property type="entry name" value="Ribosomal_uL18_B"/>
    <property type="match status" value="1"/>
</dbReference>
<dbReference type="InterPro" id="IPR004389">
    <property type="entry name" value="Ribosomal_uL18_bac-type"/>
</dbReference>
<dbReference type="InterPro" id="IPR005484">
    <property type="entry name" value="Ribosomal_uL18_bac/euk"/>
</dbReference>
<dbReference type="NCBIfam" id="TIGR00060">
    <property type="entry name" value="L18_bact"/>
    <property type="match status" value="1"/>
</dbReference>
<dbReference type="PANTHER" id="PTHR12899">
    <property type="entry name" value="39S RIBOSOMAL PROTEIN L18, MITOCHONDRIAL"/>
    <property type="match status" value="1"/>
</dbReference>
<dbReference type="PANTHER" id="PTHR12899:SF3">
    <property type="entry name" value="LARGE RIBOSOMAL SUBUNIT PROTEIN UL18M"/>
    <property type="match status" value="1"/>
</dbReference>
<dbReference type="Pfam" id="PF00861">
    <property type="entry name" value="Ribosomal_L18p"/>
    <property type="match status" value="1"/>
</dbReference>
<dbReference type="SUPFAM" id="SSF53137">
    <property type="entry name" value="Translational machinery components"/>
    <property type="match status" value="1"/>
</dbReference>
<sequence>MISKPDKNKLRQKRHRRVRGKLSGTADRPRLNVFRSNTGIYAQVIDDVAGVTLASASTLDKEVSKGTKTEQAVAVGKLVAERANAKGISEVVFDRGGYLYHGRVKALADAARENGLKF</sequence>
<comment type="function">
    <text evidence="1">This is one of the proteins that bind and probably mediate the attachment of the 5S RNA into the large ribosomal subunit, where it forms part of the central protuberance.</text>
</comment>
<comment type="subunit">
    <text evidence="1">Part of the 50S ribosomal subunit; part of the 5S rRNA/L5/L18/L25 subcomplex. Contacts the 5S and 23S rRNAs.</text>
</comment>
<comment type="similarity">
    <text evidence="1">Belongs to the universal ribosomal protein uL18 family.</text>
</comment>
<accession>B5E6H1</accession>
<organism>
    <name type="scientific">Streptococcus pneumoniae serotype 19F (strain G54)</name>
    <dbReference type="NCBI Taxonomy" id="512566"/>
    <lineage>
        <taxon>Bacteria</taxon>
        <taxon>Bacillati</taxon>
        <taxon>Bacillota</taxon>
        <taxon>Bacilli</taxon>
        <taxon>Lactobacillales</taxon>
        <taxon>Streptococcaceae</taxon>
        <taxon>Streptococcus</taxon>
    </lineage>
</organism>
<name>RL18_STRP4</name>
<gene>
    <name evidence="1" type="primary">rplR</name>
    <name type="ordered locus">SPG_0211</name>
</gene>
<reference key="1">
    <citation type="journal article" date="2001" name="Microb. Drug Resist.">
        <title>Annotated draft genomic sequence from a Streptococcus pneumoniae type 19F clinical isolate.</title>
        <authorList>
            <person name="Dopazo J."/>
            <person name="Mendoza A."/>
            <person name="Herrero J."/>
            <person name="Caldara F."/>
            <person name="Humbert Y."/>
            <person name="Friedli L."/>
            <person name="Guerrier M."/>
            <person name="Grand-Schenk E."/>
            <person name="Gandin C."/>
            <person name="de Francesco M."/>
            <person name="Polissi A."/>
            <person name="Buell G."/>
            <person name="Feger G."/>
            <person name="Garcia E."/>
            <person name="Peitsch M."/>
            <person name="Garcia-Bustos J.F."/>
        </authorList>
    </citation>
    <scope>NUCLEOTIDE SEQUENCE [LARGE SCALE GENOMIC DNA]</scope>
    <source>
        <strain>G54</strain>
    </source>
</reference>
<reference key="2">
    <citation type="submission" date="2008-03" db="EMBL/GenBank/DDBJ databases">
        <title>Pneumococcal beta glucoside metabolism investigated by whole genome comparison.</title>
        <authorList>
            <person name="Mulas L."/>
            <person name="Trappetti C."/>
            <person name="Hakenbeck R."/>
            <person name="Iannelli F."/>
            <person name="Pozzi G."/>
            <person name="Davidsen T.M."/>
            <person name="Tettelin H."/>
            <person name="Oggioni M."/>
        </authorList>
    </citation>
    <scope>NUCLEOTIDE SEQUENCE [LARGE SCALE GENOMIC DNA]</scope>
    <source>
        <strain>G54</strain>
    </source>
</reference>